<name>ATPB_GEOSW</name>
<gene>
    <name evidence="1" type="primary">atpD</name>
    <name type="ordered locus">GWCH70_3303</name>
</gene>
<proteinExistence type="inferred from homology"/>
<accession>C5D990</accession>
<protein>
    <recommendedName>
        <fullName evidence="1">ATP synthase subunit beta</fullName>
        <ecNumber evidence="1">7.1.2.2</ecNumber>
    </recommendedName>
    <alternativeName>
        <fullName evidence="1">ATP synthase F1 sector subunit beta</fullName>
    </alternativeName>
    <alternativeName>
        <fullName evidence="1">F-ATPase subunit beta</fullName>
    </alternativeName>
</protein>
<evidence type="ECO:0000255" key="1">
    <source>
        <dbReference type="HAMAP-Rule" id="MF_01347"/>
    </source>
</evidence>
<reference key="1">
    <citation type="submission" date="2009-06" db="EMBL/GenBank/DDBJ databases">
        <title>Complete sequence of chromosome of Geopacillus sp. WCH70.</title>
        <authorList>
            <consortium name="US DOE Joint Genome Institute"/>
            <person name="Lucas S."/>
            <person name="Copeland A."/>
            <person name="Lapidus A."/>
            <person name="Glavina del Rio T."/>
            <person name="Dalin E."/>
            <person name="Tice H."/>
            <person name="Bruce D."/>
            <person name="Goodwin L."/>
            <person name="Pitluck S."/>
            <person name="Chertkov O."/>
            <person name="Brettin T."/>
            <person name="Detter J.C."/>
            <person name="Han C."/>
            <person name="Larimer F."/>
            <person name="Land M."/>
            <person name="Hauser L."/>
            <person name="Kyrpides N."/>
            <person name="Mikhailova N."/>
            <person name="Brumm P."/>
            <person name="Mead D.A."/>
            <person name="Richardson P."/>
        </authorList>
    </citation>
    <scope>NUCLEOTIDE SEQUENCE [LARGE SCALE GENOMIC DNA]</scope>
    <source>
        <strain>WCH70</strain>
    </source>
</reference>
<sequence>MTKGRVIQVMGPVVDVKFENGHLPAIYNALKIQHKARNENEVDIDLTLEVALHLGDDTVRTIAMASTDGLIRGMEVIDTGAPISVPVGEVTLGRVFNVLGEPIDMQGEIPDDARRDPIHRPAPKFEELATEVEILETGIKVVDLLAPYIKGGKIGLFGGAGVGKTVLIQELIHNIAQEHGGISVFAGVGERTREGNDLYHEMKDSGVISKTAMVFGQMNEPPGARMRVALTGLTMAEYFRDEQGQDVLLFIDNIFRFTQAGSEVSALLGRMPSAVGYQPTLATEMGQLQERITSTATGSITSIQAIYVPADDYTDPAPATTFSHLDATTNLERKLAEMGIYPAVDPLASTSRALAPEIVGEEHYQVARKVQQTLQRYRELQDIIAILGMDELSDEDKLIVHRARRIQFFLSQNFHVAEQFTGQPGSYVPIKETVRGFKEILEGKYDHIPEDAFRLVGRIEEVVEKAKQMGVEV</sequence>
<keyword id="KW-0066">ATP synthesis</keyword>
<keyword id="KW-0067">ATP-binding</keyword>
<keyword id="KW-1003">Cell membrane</keyword>
<keyword id="KW-0139">CF(1)</keyword>
<keyword id="KW-0375">Hydrogen ion transport</keyword>
<keyword id="KW-0406">Ion transport</keyword>
<keyword id="KW-0472">Membrane</keyword>
<keyword id="KW-0547">Nucleotide-binding</keyword>
<keyword id="KW-1278">Translocase</keyword>
<keyword id="KW-0813">Transport</keyword>
<comment type="function">
    <text evidence="1">Produces ATP from ADP in the presence of a proton gradient across the membrane. The catalytic sites are hosted primarily by the beta subunits.</text>
</comment>
<comment type="catalytic activity">
    <reaction evidence="1">
        <text>ATP + H2O + 4 H(+)(in) = ADP + phosphate + 5 H(+)(out)</text>
        <dbReference type="Rhea" id="RHEA:57720"/>
        <dbReference type="ChEBI" id="CHEBI:15377"/>
        <dbReference type="ChEBI" id="CHEBI:15378"/>
        <dbReference type="ChEBI" id="CHEBI:30616"/>
        <dbReference type="ChEBI" id="CHEBI:43474"/>
        <dbReference type="ChEBI" id="CHEBI:456216"/>
        <dbReference type="EC" id="7.1.2.2"/>
    </reaction>
</comment>
<comment type="subunit">
    <text evidence="1">F-type ATPases have 2 components, CF(1) - the catalytic core - and CF(0) - the membrane proton channel. CF(1) has five subunits: alpha(3), beta(3), gamma(1), delta(1), epsilon(1). CF(0) has three main subunits: a(1), b(2) and c(9-12). The alpha and beta chains form an alternating ring which encloses part of the gamma chain. CF(1) is attached to CF(0) by a central stalk formed by the gamma and epsilon chains, while a peripheral stalk is formed by the delta and b chains.</text>
</comment>
<comment type="subcellular location">
    <subcellularLocation>
        <location evidence="1">Cell membrane</location>
        <topology evidence="1">Peripheral membrane protein</topology>
    </subcellularLocation>
</comment>
<comment type="similarity">
    <text evidence="1">Belongs to the ATPase alpha/beta chains family.</text>
</comment>
<feature type="chain" id="PRO_1000214827" description="ATP synthase subunit beta">
    <location>
        <begin position="1"/>
        <end position="473"/>
    </location>
</feature>
<feature type="binding site" evidence="1">
    <location>
        <begin position="158"/>
        <end position="165"/>
    </location>
    <ligand>
        <name>ATP</name>
        <dbReference type="ChEBI" id="CHEBI:30616"/>
    </ligand>
</feature>
<dbReference type="EC" id="7.1.2.2" evidence="1"/>
<dbReference type="EMBL" id="CP001638">
    <property type="protein sequence ID" value="ACS25943.1"/>
    <property type="molecule type" value="Genomic_DNA"/>
</dbReference>
<dbReference type="BMRB" id="C5D990"/>
<dbReference type="SMR" id="C5D990"/>
<dbReference type="STRING" id="471223.GWCH70_3303"/>
<dbReference type="KEGG" id="gwc:GWCH70_3303"/>
<dbReference type="eggNOG" id="COG0055">
    <property type="taxonomic scope" value="Bacteria"/>
</dbReference>
<dbReference type="HOGENOM" id="CLU_022398_0_2_9"/>
<dbReference type="OrthoDB" id="9801639at2"/>
<dbReference type="GO" id="GO:0005886">
    <property type="term" value="C:plasma membrane"/>
    <property type="evidence" value="ECO:0007669"/>
    <property type="project" value="UniProtKB-SubCell"/>
</dbReference>
<dbReference type="GO" id="GO:0045259">
    <property type="term" value="C:proton-transporting ATP synthase complex"/>
    <property type="evidence" value="ECO:0007669"/>
    <property type="project" value="UniProtKB-KW"/>
</dbReference>
<dbReference type="GO" id="GO:0005524">
    <property type="term" value="F:ATP binding"/>
    <property type="evidence" value="ECO:0007669"/>
    <property type="project" value="UniProtKB-UniRule"/>
</dbReference>
<dbReference type="GO" id="GO:0016887">
    <property type="term" value="F:ATP hydrolysis activity"/>
    <property type="evidence" value="ECO:0007669"/>
    <property type="project" value="InterPro"/>
</dbReference>
<dbReference type="GO" id="GO:0046933">
    <property type="term" value="F:proton-transporting ATP synthase activity, rotational mechanism"/>
    <property type="evidence" value="ECO:0007669"/>
    <property type="project" value="UniProtKB-UniRule"/>
</dbReference>
<dbReference type="CDD" id="cd18110">
    <property type="entry name" value="ATP-synt_F1_beta_C"/>
    <property type="match status" value="1"/>
</dbReference>
<dbReference type="CDD" id="cd18115">
    <property type="entry name" value="ATP-synt_F1_beta_N"/>
    <property type="match status" value="1"/>
</dbReference>
<dbReference type="CDD" id="cd01133">
    <property type="entry name" value="F1-ATPase_beta_CD"/>
    <property type="match status" value="1"/>
</dbReference>
<dbReference type="FunFam" id="1.10.1140.10:FF:000001">
    <property type="entry name" value="ATP synthase subunit beta"/>
    <property type="match status" value="1"/>
</dbReference>
<dbReference type="FunFam" id="2.40.10.170:FF:000005">
    <property type="entry name" value="ATP synthase subunit beta"/>
    <property type="match status" value="1"/>
</dbReference>
<dbReference type="FunFam" id="3.40.50.300:FF:000004">
    <property type="entry name" value="ATP synthase subunit beta"/>
    <property type="match status" value="1"/>
</dbReference>
<dbReference type="Gene3D" id="2.40.10.170">
    <property type="match status" value="1"/>
</dbReference>
<dbReference type="Gene3D" id="1.10.1140.10">
    <property type="entry name" value="Bovine Mitochondrial F1-atpase, Atp Synthase Beta Chain, Chain D, domain 3"/>
    <property type="match status" value="1"/>
</dbReference>
<dbReference type="Gene3D" id="3.40.50.300">
    <property type="entry name" value="P-loop containing nucleotide triphosphate hydrolases"/>
    <property type="match status" value="1"/>
</dbReference>
<dbReference type="HAMAP" id="MF_01347">
    <property type="entry name" value="ATP_synth_beta_bact"/>
    <property type="match status" value="1"/>
</dbReference>
<dbReference type="InterPro" id="IPR003593">
    <property type="entry name" value="AAA+_ATPase"/>
</dbReference>
<dbReference type="InterPro" id="IPR055190">
    <property type="entry name" value="ATP-synt_VA_C"/>
</dbReference>
<dbReference type="InterPro" id="IPR005722">
    <property type="entry name" value="ATP_synth_F1_bsu"/>
</dbReference>
<dbReference type="InterPro" id="IPR020003">
    <property type="entry name" value="ATPase_a/bsu_AS"/>
</dbReference>
<dbReference type="InterPro" id="IPR050053">
    <property type="entry name" value="ATPase_alpha/beta_chains"/>
</dbReference>
<dbReference type="InterPro" id="IPR004100">
    <property type="entry name" value="ATPase_F1/V1/A1_a/bsu_N"/>
</dbReference>
<dbReference type="InterPro" id="IPR036121">
    <property type="entry name" value="ATPase_F1/V1/A1_a/bsu_N_sf"/>
</dbReference>
<dbReference type="InterPro" id="IPR000194">
    <property type="entry name" value="ATPase_F1/V1/A1_a/bsu_nucl-bd"/>
</dbReference>
<dbReference type="InterPro" id="IPR024034">
    <property type="entry name" value="ATPase_F1/V1_b/a_C"/>
</dbReference>
<dbReference type="InterPro" id="IPR027417">
    <property type="entry name" value="P-loop_NTPase"/>
</dbReference>
<dbReference type="NCBIfam" id="TIGR01039">
    <property type="entry name" value="atpD"/>
    <property type="match status" value="1"/>
</dbReference>
<dbReference type="PANTHER" id="PTHR15184">
    <property type="entry name" value="ATP SYNTHASE"/>
    <property type="match status" value="1"/>
</dbReference>
<dbReference type="PANTHER" id="PTHR15184:SF71">
    <property type="entry name" value="ATP SYNTHASE SUBUNIT BETA, MITOCHONDRIAL"/>
    <property type="match status" value="1"/>
</dbReference>
<dbReference type="Pfam" id="PF00006">
    <property type="entry name" value="ATP-synt_ab"/>
    <property type="match status" value="1"/>
</dbReference>
<dbReference type="Pfam" id="PF02874">
    <property type="entry name" value="ATP-synt_ab_N"/>
    <property type="match status" value="1"/>
</dbReference>
<dbReference type="Pfam" id="PF22919">
    <property type="entry name" value="ATP-synt_VA_C"/>
    <property type="match status" value="1"/>
</dbReference>
<dbReference type="SMART" id="SM00382">
    <property type="entry name" value="AAA"/>
    <property type="match status" value="1"/>
</dbReference>
<dbReference type="SUPFAM" id="SSF47917">
    <property type="entry name" value="C-terminal domain of alpha and beta subunits of F1 ATP synthase"/>
    <property type="match status" value="1"/>
</dbReference>
<dbReference type="SUPFAM" id="SSF50615">
    <property type="entry name" value="N-terminal domain of alpha and beta subunits of F1 ATP synthase"/>
    <property type="match status" value="1"/>
</dbReference>
<dbReference type="SUPFAM" id="SSF52540">
    <property type="entry name" value="P-loop containing nucleoside triphosphate hydrolases"/>
    <property type="match status" value="1"/>
</dbReference>
<dbReference type="PROSITE" id="PS00152">
    <property type="entry name" value="ATPASE_ALPHA_BETA"/>
    <property type="match status" value="1"/>
</dbReference>
<organism>
    <name type="scientific">Geobacillus sp. (strain WCH70)</name>
    <dbReference type="NCBI Taxonomy" id="471223"/>
    <lineage>
        <taxon>Bacteria</taxon>
        <taxon>Bacillati</taxon>
        <taxon>Bacillota</taxon>
        <taxon>Bacilli</taxon>
        <taxon>Bacillales</taxon>
        <taxon>Anoxybacillaceae</taxon>
        <taxon>Geobacillus</taxon>
    </lineage>
</organism>